<evidence type="ECO:0000255" key="1">
    <source>
        <dbReference type="HAMAP-Rule" id="MF_01629"/>
    </source>
</evidence>
<protein>
    <recommendedName>
        <fullName evidence="1">Pyridoxine/pyridoxamine 5'-phosphate oxidase</fullName>
        <ecNumber evidence="1">1.4.3.5</ecNumber>
    </recommendedName>
    <alternativeName>
        <fullName evidence="1">PNP/PMP oxidase</fullName>
        <shortName evidence="1">PNPOx</shortName>
    </alternativeName>
    <alternativeName>
        <fullName evidence="1">Pyridoxal 5'-phosphate synthase</fullName>
    </alternativeName>
</protein>
<proteinExistence type="inferred from homology"/>
<gene>
    <name evidence="1" type="primary">pdxH</name>
    <name type="ordered locus">PsycPRwf_1259</name>
</gene>
<organism>
    <name type="scientific">Psychrobacter sp. (strain PRwf-1)</name>
    <dbReference type="NCBI Taxonomy" id="349106"/>
    <lineage>
        <taxon>Bacteria</taxon>
        <taxon>Pseudomonadati</taxon>
        <taxon>Pseudomonadota</taxon>
        <taxon>Gammaproteobacteria</taxon>
        <taxon>Moraxellales</taxon>
        <taxon>Moraxellaceae</taxon>
        <taxon>Psychrobacter</taxon>
    </lineage>
</organism>
<feature type="chain" id="PRO_0000335795" description="Pyridoxine/pyridoxamine 5'-phosphate oxidase">
    <location>
        <begin position="1"/>
        <end position="215"/>
    </location>
</feature>
<feature type="binding site" evidence="1">
    <location>
        <begin position="7"/>
        <end position="10"/>
    </location>
    <ligand>
        <name>substrate</name>
    </ligand>
</feature>
<feature type="binding site" evidence="1">
    <location>
        <begin position="60"/>
        <end position="65"/>
    </location>
    <ligand>
        <name>FMN</name>
        <dbReference type="ChEBI" id="CHEBI:58210"/>
    </ligand>
</feature>
<feature type="binding site" evidence="1">
    <location>
        <position position="65"/>
    </location>
    <ligand>
        <name>substrate</name>
    </ligand>
</feature>
<feature type="binding site" evidence="1">
    <location>
        <begin position="75"/>
        <end position="76"/>
    </location>
    <ligand>
        <name>FMN</name>
        <dbReference type="ChEBI" id="CHEBI:58210"/>
    </ligand>
</feature>
<feature type="binding site" evidence="1">
    <location>
        <position position="82"/>
    </location>
    <ligand>
        <name>FMN</name>
        <dbReference type="ChEBI" id="CHEBI:58210"/>
    </ligand>
</feature>
<feature type="binding site" evidence="1">
    <location>
        <position position="104"/>
    </location>
    <ligand>
        <name>FMN</name>
        <dbReference type="ChEBI" id="CHEBI:58210"/>
    </ligand>
</feature>
<feature type="binding site" evidence="1">
    <location>
        <position position="122"/>
    </location>
    <ligand>
        <name>substrate</name>
    </ligand>
</feature>
<feature type="binding site" evidence="1">
    <location>
        <position position="126"/>
    </location>
    <ligand>
        <name>substrate</name>
    </ligand>
</feature>
<feature type="binding site" evidence="1">
    <location>
        <position position="130"/>
    </location>
    <ligand>
        <name>substrate</name>
    </ligand>
</feature>
<feature type="binding site" evidence="1">
    <location>
        <begin position="140"/>
        <end position="141"/>
    </location>
    <ligand>
        <name>FMN</name>
        <dbReference type="ChEBI" id="CHEBI:58210"/>
    </ligand>
</feature>
<feature type="binding site" evidence="1">
    <location>
        <position position="186"/>
    </location>
    <ligand>
        <name>FMN</name>
        <dbReference type="ChEBI" id="CHEBI:58210"/>
    </ligand>
</feature>
<feature type="binding site" evidence="1">
    <location>
        <begin position="192"/>
        <end position="194"/>
    </location>
    <ligand>
        <name>substrate</name>
    </ligand>
</feature>
<feature type="binding site" evidence="1">
    <location>
        <position position="196"/>
    </location>
    <ligand>
        <name>FMN</name>
        <dbReference type="ChEBI" id="CHEBI:58210"/>
    </ligand>
</feature>
<sequence>MDFSDKRLSYEKGALHEEILPQEPFAMLKQWLNEAIEQNVPEPYAISLATCGSDNMPAVRTVLVREVTELGVVFYTNYLSHKGQDIEQNPHAEALFFWHDMQRQVRVRGVIAKVDRAKTEAYFQKRPYESQVGAWVSQPQSGEVASREAMDEIFANLKQKFPEGDTVPTPEFWGGYEIAATEIEFWQGRANRLHDRLLYSRASTQDTWQITRLLP</sequence>
<accession>A5WEW5</accession>
<keyword id="KW-0285">Flavoprotein</keyword>
<keyword id="KW-0288">FMN</keyword>
<keyword id="KW-0560">Oxidoreductase</keyword>
<keyword id="KW-0664">Pyridoxine biosynthesis</keyword>
<dbReference type="EC" id="1.4.3.5" evidence="1"/>
<dbReference type="EMBL" id="CP000713">
    <property type="protein sequence ID" value="ABQ94206.1"/>
    <property type="molecule type" value="Genomic_DNA"/>
</dbReference>
<dbReference type="SMR" id="A5WEW5"/>
<dbReference type="STRING" id="349106.PsycPRwf_1259"/>
<dbReference type="KEGG" id="prw:PsycPRwf_1259"/>
<dbReference type="eggNOG" id="COG0259">
    <property type="taxonomic scope" value="Bacteria"/>
</dbReference>
<dbReference type="HOGENOM" id="CLU_032263_2_2_6"/>
<dbReference type="UniPathway" id="UPA01068">
    <property type="reaction ID" value="UER00304"/>
</dbReference>
<dbReference type="UniPathway" id="UPA01068">
    <property type="reaction ID" value="UER00305"/>
</dbReference>
<dbReference type="GO" id="GO:0010181">
    <property type="term" value="F:FMN binding"/>
    <property type="evidence" value="ECO:0007669"/>
    <property type="project" value="UniProtKB-UniRule"/>
</dbReference>
<dbReference type="GO" id="GO:0004733">
    <property type="term" value="F:pyridoxamine phosphate oxidase activity"/>
    <property type="evidence" value="ECO:0007669"/>
    <property type="project" value="UniProtKB-UniRule"/>
</dbReference>
<dbReference type="GO" id="GO:0008615">
    <property type="term" value="P:pyridoxine biosynthetic process"/>
    <property type="evidence" value="ECO:0007669"/>
    <property type="project" value="UniProtKB-KW"/>
</dbReference>
<dbReference type="Gene3D" id="2.30.110.10">
    <property type="entry name" value="Electron Transport, Fmn-binding Protein, Chain A"/>
    <property type="match status" value="1"/>
</dbReference>
<dbReference type="HAMAP" id="MF_01629">
    <property type="entry name" value="PdxH"/>
    <property type="match status" value="1"/>
</dbReference>
<dbReference type="InterPro" id="IPR000659">
    <property type="entry name" value="Pyridox_Oxase"/>
</dbReference>
<dbReference type="InterPro" id="IPR019740">
    <property type="entry name" value="Pyridox_Oxase_CS"/>
</dbReference>
<dbReference type="InterPro" id="IPR011576">
    <property type="entry name" value="Pyridox_Oxase_N"/>
</dbReference>
<dbReference type="InterPro" id="IPR019576">
    <property type="entry name" value="Pyridoxamine_oxidase_dimer_C"/>
</dbReference>
<dbReference type="InterPro" id="IPR012349">
    <property type="entry name" value="Split_barrel_FMN-bd"/>
</dbReference>
<dbReference type="NCBIfam" id="TIGR00558">
    <property type="entry name" value="pdxH"/>
    <property type="match status" value="1"/>
</dbReference>
<dbReference type="NCBIfam" id="NF004231">
    <property type="entry name" value="PRK05679.1"/>
    <property type="match status" value="1"/>
</dbReference>
<dbReference type="PANTHER" id="PTHR10851:SF0">
    <property type="entry name" value="PYRIDOXINE-5'-PHOSPHATE OXIDASE"/>
    <property type="match status" value="1"/>
</dbReference>
<dbReference type="PANTHER" id="PTHR10851">
    <property type="entry name" value="PYRIDOXINE-5-PHOSPHATE OXIDASE"/>
    <property type="match status" value="1"/>
</dbReference>
<dbReference type="Pfam" id="PF10590">
    <property type="entry name" value="PNP_phzG_C"/>
    <property type="match status" value="1"/>
</dbReference>
<dbReference type="Pfam" id="PF01243">
    <property type="entry name" value="PNPOx_N"/>
    <property type="match status" value="1"/>
</dbReference>
<dbReference type="PIRSF" id="PIRSF000190">
    <property type="entry name" value="Pyd_amn-ph_oxd"/>
    <property type="match status" value="1"/>
</dbReference>
<dbReference type="SUPFAM" id="SSF50475">
    <property type="entry name" value="FMN-binding split barrel"/>
    <property type="match status" value="1"/>
</dbReference>
<dbReference type="PROSITE" id="PS01064">
    <property type="entry name" value="PYRIDOX_OXIDASE"/>
    <property type="match status" value="1"/>
</dbReference>
<comment type="function">
    <text evidence="1">Catalyzes the oxidation of either pyridoxine 5'-phosphate (PNP) or pyridoxamine 5'-phosphate (PMP) into pyridoxal 5'-phosphate (PLP).</text>
</comment>
<comment type="catalytic activity">
    <reaction evidence="1">
        <text>pyridoxamine 5'-phosphate + O2 + H2O = pyridoxal 5'-phosphate + H2O2 + NH4(+)</text>
        <dbReference type="Rhea" id="RHEA:15817"/>
        <dbReference type="ChEBI" id="CHEBI:15377"/>
        <dbReference type="ChEBI" id="CHEBI:15379"/>
        <dbReference type="ChEBI" id="CHEBI:16240"/>
        <dbReference type="ChEBI" id="CHEBI:28938"/>
        <dbReference type="ChEBI" id="CHEBI:58451"/>
        <dbReference type="ChEBI" id="CHEBI:597326"/>
        <dbReference type="EC" id="1.4.3.5"/>
    </reaction>
</comment>
<comment type="catalytic activity">
    <reaction evidence="1">
        <text>pyridoxine 5'-phosphate + O2 = pyridoxal 5'-phosphate + H2O2</text>
        <dbReference type="Rhea" id="RHEA:15149"/>
        <dbReference type="ChEBI" id="CHEBI:15379"/>
        <dbReference type="ChEBI" id="CHEBI:16240"/>
        <dbReference type="ChEBI" id="CHEBI:58589"/>
        <dbReference type="ChEBI" id="CHEBI:597326"/>
        <dbReference type="EC" id="1.4.3.5"/>
    </reaction>
</comment>
<comment type="cofactor">
    <cofactor evidence="1">
        <name>FMN</name>
        <dbReference type="ChEBI" id="CHEBI:58210"/>
    </cofactor>
    <text evidence="1">Binds 1 FMN per subunit.</text>
</comment>
<comment type="pathway">
    <text evidence="1">Cofactor metabolism; pyridoxal 5'-phosphate salvage; pyridoxal 5'-phosphate from pyridoxamine 5'-phosphate: step 1/1.</text>
</comment>
<comment type="pathway">
    <text evidence="1">Cofactor metabolism; pyridoxal 5'-phosphate salvage; pyridoxal 5'-phosphate from pyridoxine 5'-phosphate: step 1/1.</text>
</comment>
<comment type="subunit">
    <text evidence="1">Homodimer.</text>
</comment>
<comment type="similarity">
    <text evidence="1">Belongs to the pyridoxamine 5'-phosphate oxidase family.</text>
</comment>
<reference key="1">
    <citation type="submission" date="2007-05" db="EMBL/GenBank/DDBJ databases">
        <title>Complete sequence of chromosome of Psychrobacter sp. PRwf-1.</title>
        <authorList>
            <consortium name="US DOE Joint Genome Institute"/>
            <person name="Copeland A."/>
            <person name="Lucas S."/>
            <person name="Lapidus A."/>
            <person name="Barry K."/>
            <person name="Detter J.C."/>
            <person name="Glavina del Rio T."/>
            <person name="Hammon N."/>
            <person name="Israni S."/>
            <person name="Dalin E."/>
            <person name="Tice H."/>
            <person name="Pitluck S."/>
            <person name="Chain P."/>
            <person name="Malfatti S."/>
            <person name="Shin M."/>
            <person name="Vergez L."/>
            <person name="Schmutz J."/>
            <person name="Larimer F."/>
            <person name="Land M."/>
            <person name="Hauser L."/>
            <person name="Kyrpides N."/>
            <person name="Kim E."/>
            <person name="Tiedje J."/>
            <person name="Richardson P."/>
        </authorList>
    </citation>
    <scope>NUCLEOTIDE SEQUENCE [LARGE SCALE GENOMIC DNA]</scope>
    <source>
        <strain>PRwf-1</strain>
    </source>
</reference>
<name>PDXH_PSYWF</name>